<reference key="1">
    <citation type="journal article" date="1998" name="Nature">
        <title>Deciphering the biology of Mycobacterium tuberculosis from the complete genome sequence.</title>
        <authorList>
            <person name="Cole S.T."/>
            <person name="Brosch R."/>
            <person name="Parkhill J."/>
            <person name="Garnier T."/>
            <person name="Churcher C.M."/>
            <person name="Harris D.E."/>
            <person name="Gordon S.V."/>
            <person name="Eiglmeier K."/>
            <person name="Gas S."/>
            <person name="Barry C.E. III"/>
            <person name="Tekaia F."/>
            <person name="Badcock K."/>
            <person name="Basham D."/>
            <person name="Brown D."/>
            <person name="Chillingworth T."/>
            <person name="Connor R."/>
            <person name="Davies R.M."/>
            <person name="Devlin K."/>
            <person name="Feltwell T."/>
            <person name="Gentles S."/>
            <person name="Hamlin N."/>
            <person name="Holroyd S."/>
            <person name="Hornsby T."/>
            <person name="Jagels K."/>
            <person name="Krogh A."/>
            <person name="McLean J."/>
            <person name="Moule S."/>
            <person name="Murphy L.D."/>
            <person name="Oliver S."/>
            <person name="Osborne J."/>
            <person name="Quail M.A."/>
            <person name="Rajandream M.A."/>
            <person name="Rogers J."/>
            <person name="Rutter S."/>
            <person name="Seeger K."/>
            <person name="Skelton S."/>
            <person name="Squares S."/>
            <person name="Squares R."/>
            <person name="Sulston J.E."/>
            <person name="Taylor K."/>
            <person name="Whitehead S."/>
            <person name="Barrell B.G."/>
        </authorList>
    </citation>
    <scope>NUCLEOTIDE SEQUENCE [LARGE SCALE GENOMIC DNA]</scope>
    <source>
        <strain>ATCC 25618 / H37Rv</strain>
    </source>
</reference>
<reference key="2">
    <citation type="journal article" date="2002" name="Biochem. J.">
        <title>Overexpression and functional characterization of an ABC (ATP-binding cassette) transporter encoded by the genes drrA and drrB of Mycobacterium tuberculosis.</title>
        <authorList>
            <person name="Choudhuri B.S."/>
            <person name="Bhakta S."/>
            <person name="Barik R."/>
            <person name="Basu J."/>
            <person name="Kundu M."/>
            <person name="Chakrabarti P."/>
        </authorList>
    </citation>
    <scope>FUNCTION IN DOXORUBICIN RESISTANCE</scope>
    <scope>SUBCELLULAR LOCATION</scope>
</reference>
<reference key="3">
    <citation type="journal article" date="2008" name="BMC Syst. Biol.">
        <title>targetTB: a target identification pipeline for Mycobacterium tuberculosis through an interactome, reactome and genome-scale structural analysis.</title>
        <authorList>
            <person name="Raman K."/>
            <person name="Yeturu K."/>
            <person name="Chandra N."/>
        </authorList>
    </citation>
    <scope>IDENTIFICATION AS A DRUG TARGET [LARGE SCALE ANALYSIS]</scope>
</reference>
<reference key="4">
    <citation type="journal article" date="2011" name="Mol. Cell. Proteomics">
        <title>Proteogenomic analysis of Mycobacterium tuberculosis by high resolution mass spectrometry.</title>
        <authorList>
            <person name="Kelkar D.S."/>
            <person name="Kumar D."/>
            <person name="Kumar P."/>
            <person name="Balakrishnan L."/>
            <person name="Muthusamy B."/>
            <person name="Yadav A.K."/>
            <person name="Shrivastava P."/>
            <person name="Marimuthu A."/>
            <person name="Anand S."/>
            <person name="Sundaram H."/>
            <person name="Kingsbury R."/>
            <person name="Harsha H.C."/>
            <person name="Nair B."/>
            <person name="Prasad T.S."/>
            <person name="Chauhan D.S."/>
            <person name="Katoch K."/>
            <person name="Katoch V.M."/>
            <person name="Kumar P."/>
            <person name="Chaerkady R."/>
            <person name="Ramachandran S."/>
            <person name="Dash D."/>
            <person name="Pandey A."/>
        </authorList>
    </citation>
    <scope>IDENTIFICATION BY MASS SPECTROMETRY [LARGE SCALE ANALYSIS]</scope>
    <source>
        <strain>ATCC 25618 / H37Rv</strain>
    </source>
</reference>
<comment type="function">
    <text evidence="2">Part of the ABC transporter complex DrrABC involved in doxorubicin resistance. Probably responsible for the translocation of the substrate across the membrane.</text>
</comment>
<comment type="subunit">
    <text evidence="3">The complex is composed of two ATP-binding proteins (DrrA) and two transmembrane proteins (DrrB and DrrC).</text>
</comment>
<comment type="subcellular location">
    <subcellularLocation>
        <location evidence="4">Cell membrane</location>
        <topology evidence="4">Multi-pass membrane protein</topology>
    </subcellularLocation>
</comment>
<comment type="miscellaneous">
    <text>Was identified as a high-confidence drug target.</text>
</comment>
<comment type="similarity">
    <text evidence="3">Belongs to the ABC-2 integral membrane protein family.</text>
</comment>
<gene>
    <name type="primary">drrB</name>
    <name type="ordered locus">Rv2937</name>
</gene>
<accession>P9WG23</accession>
<accession>L0TB30</accession>
<accession>P96206</accession>
<accession>Q7D6E7</accession>
<sequence>MSGPAIDASPALTFNQSSASIQQRRLSTGRQMWVLYRRFAAPSLLNGEVLTTVGAPIIFMVGFYIPFAIPWNQFVGGASSGVASNLGQYITPLVTLQAVSFAAIGSGFRAATDSLLGVNRRFQSMPMAPLTPLLARVWVAVDRCFTGLVISLVCGYVIGFRFHRGALYIVGFCLLVIAIGAVLSFAADLVGTVTRNPDAMLPLLSLPILIFGLLSIGLMPLKLFPHWIHPFVRNQPISQFVAALRALAGDTTKTASQVSWPVMAPTLTWLFAFVVILALSSTIVLARRP</sequence>
<organism>
    <name type="scientific">Mycobacterium tuberculosis (strain ATCC 25618 / H37Rv)</name>
    <dbReference type="NCBI Taxonomy" id="83332"/>
    <lineage>
        <taxon>Bacteria</taxon>
        <taxon>Bacillati</taxon>
        <taxon>Actinomycetota</taxon>
        <taxon>Actinomycetes</taxon>
        <taxon>Mycobacteriales</taxon>
        <taxon>Mycobacteriaceae</taxon>
        <taxon>Mycobacterium</taxon>
        <taxon>Mycobacterium tuberculosis complex</taxon>
    </lineage>
</organism>
<protein>
    <recommendedName>
        <fullName>Doxorubicin resistance ABC transporter permease protein DrrB</fullName>
    </recommendedName>
</protein>
<proteinExistence type="evidence at protein level"/>
<keyword id="KW-0046">Antibiotic resistance</keyword>
<keyword id="KW-1003">Cell membrane</keyword>
<keyword id="KW-0472">Membrane</keyword>
<keyword id="KW-1185">Reference proteome</keyword>
<keyword id="KW-0812">Transmembrane</keyword>
<keyword id="KW-1133">Transmembrane helix</keyword>
<keyword id="KW-0813">Transport</keyword>
<dbReference type="EMBL" id="AL123456">
    <property type="protein sequence ID" value="CCP45740.1"/>
    <property type="molecule type" value="Genomic_DNA"/>
</dbReference>
<dbReference type="PIR" id="E70984">
    <property type="entry name" value="E70984"/>
</dbReference>
<dbReference type="RefSeq" id="NP_217453.1">
    <property type="nucleotide sequence ID" value="NC_000962.3"/>
</dbReference>
<dbReference type="RefSeq" id="WP_003414848.1">
    <property type="nucleotide sequence ID" value="NZ_NVQJ01000015.1"/>
</dbReference>
<dbReference type="SMR" id="P9WG23"/>
<dbReference type="STRING" id="83332.Rv2937"/>
<dbReference type="PaxDb" id="83332-Rv2937"/>
<dbReference type="DNASU" id="887968"/>
<dbReference type="GeneID" id="45426925"/>
<dbReference type="GeneID" id="887968"/>
<dbReference type="KEGG" id="mtu:Rv2937"/>
<dbReference type="KEGG" id="mtv:RVBD_2937"/>
<dbReference type="TubercuList" id="Rv2937"/>
<dbReference type="eggNOG" id="COG0842">
    <property type="taxonomic scope" value="Bacteria"/>
</dbReference>
<dbReference type="InParanoid" id="P9WG23"/>
<dbReference type="OrthoDB" id="8988363at2"/>
<dbReference type="PhylomeDB" id="P9WG23"/>
<dbReference type="Proteomes" id="UP000001584">
    <property type="component" value="Chromosome"/>
</dbReference>
<dbReference type="GO" id="GO:0043190">
    <property type="term" value="C:ATP-binding cassette (ABC) transporter complex"/>
    <property type="evidence" value="ECO:0007669"/>
    <property type="project" value="InterPro"/>
</dbReference>
<dbReference type="GO" id="GO:0005886">
    <property type="term" value="C:plasma membrane"/>
    <property type="evidence" value="ECO:0000314"/>
    <property type="project" value="MTBBASE"/>
</dbReference>
<dbReference type="GO" id="GO:0140359">
    <property type="term" value="F:ABC-type transporter activity"/>
    <property type="evidence" value="ECO:0007669"/>
    <property type="project" value="InterPro"/>
</dbReference>
<dbReference type="GO" id="GO:0043215">
    <property type="term" value="P:daunorubicin transport"/>
    <property type="evidence" value="ECO:0007669"/>
    <property type="project" value="InterPro"/>
</dbReference>
<dbReference type="GO" id="GO:0071770">
    <property type="term" value="P:DIM/DIP cell wall layer assembly"/>
    <property type="evidence" value="ECO:0000315"/>
    <property type="project" value="MTBBASE"/>
</dbReference>
<dbReference type="GO" id="GO:1900753">
    <property type="term" value="P:doxorubicin transport"/>
    <property type="evidence" value="ECO:0007669"/>
    <property type="project" value="InterPro"/>
</dbReference>
<dbReference type="GO" id="GO:0008610">
    <property type="term" value="P:lipid biosynthetic process"/>
    <property type="evidence" value="ECO:0000315"/>
    <property type="project" value="MTBBASE"/>
</dbReference>
<dbReference type="GO" id="GO:0046677">
    <property type="term" value="P:response to antibiotic"/>
    <property type="evidence" value="ECO:0000314"/>
    <property type="project" value="UniProtKB"/>
</dbReference>
<dbReference type="GO" id="GO:0055085">
    <property type="term" value="P:transmembrane transport"/>
    <property type="evidence" value="ECO:0000314"/>
    <property type="project" value="UniProtKB"/>
</dbReference>
<dbReference type="InterPro" id="IPR013525">
    <property type="entry name" value="ABC2_TM"/>
</dbReference>
<dbReference type="InterPro" id="IPR000412">
    <property type="entry name" value="ABC_2_transport"/>
</dbReference>
<dbReference type="InterPro" id="IPR004377">
    <property type="entry name" value="ABC_transpt_DrrB/DrrC"/>
</dbReference>
<dbReference type="InterPro" id="IPR051328">
    <property type="entry name" value="T7SS_ABC-Transporter"/>
</dbReference>
<dbReference type="NCBIfam" id="TIGR00025">
    <property type="entry name" value="Mtu_efflux"/>
    <property type="match status" value="1"/>
</dbReference>
<dbReference type="PANTHER" id="PTHR43077:SF8">
    <property type="entry name" value="DOXORUBICIN RESISTANCE ABC TRANSPORTER PERMEASE PROTEIN DRRB"/>
    <property type="match status" value="1"/>
</dbReference>
<dbReference type="PANTHER" id="PTHR43077">
    <property type="entry name" value="TRANSPORT PERMEASE YVFS-RELATED"/>
    <property type="match status" value="1"/>
</dbReference>
<dbReference type="Pfam" id="PF12698">
    <property type="entry name" value="ABC2_membrane_3"/>
    <property type="match status" value="1"/>
</dbReference>
<dbReference type="PIRSF" id="PIRSF006648">
    <property type="entry name" value="DrrB"/>
    <property type="match status" value="1"/>
</dbReference>
<name>DRRB_MYCTU</name>
<feature type="chain" id="PRO_0000393226" description="Doxorubicin resistance ABC transporter permease protein DrrB">
    <location>
        <begin position="1"/>
        <end position="289"/>
    </location>
</feature>
<feature type="transmembrane region" description="Helical" evidence="1">
    <location>
        <begin position="49"/>
        <end position="69"/>
    </location>
</feature>
<feature type="transmembrane region" description="Helical" evidence="1">
    <location>
        <begin position="88"/>
        <end position="108"/>
    </location>
</feature>
<feature type="transmembrane region" description="Helical" evidence="1">
    <location>
        <begin position="138"/>
        <end position="158"/>
    </location>
</feature>
<feature type="transmembrane region" description="Helical" evidence="1">
    <location>
        <begin position="166"/>
        <end position="186"/>
    </location>
</feature>
<feature type="transmembrane region" description="Helical" evidence="1">
    <location>
        <begin position="199"/>
        <end position="219"/>
    </location>
</feature>
<feature type="transmembrane region" description="Helical" evidence="1">
    <location>
        <begin position="266"/>
        <end position="286"/>
    </location>
</feature>
<feature type="domain" description="ABC transmembrane type-2">
    <location>
        <begin position="47"/>
        <end position="282"/>
    </location>
</feature>
<evidence type="ECO:0000255" key="1"/>
<evidence type="ECO:0000269" key="2">
    <source>
    </source>
</evidence>
<evidence type="ECO:0000305" key="3"/>
<evidence type="ECO:0000305" key="4">
    <source>
    </source>
</evidence>